<name>SYI_STRA3</name>
<evidence type="ECO:0000255" key="1">
    <source>
        <dbReference type="HAMAP-Rule" id="MF_02002"/>
    </source>
</evidence>
<gene>
    <name evidence="1" type="primary">ileS</name>
    <name type="ordered locus">gbs0532</name>
</gene>
<feature type="chain" id="PRO_0000098476" description="Isoleucine--tRNA ligase">
    <location>
        <begin position="1"/>
        <end position="930"/>
    </location>
</feature>
<feature type="short sequence motif" description="'HIGH' region">
    <location>
        <begin position="57"/>
        <end position="67"/>
    </location>
</feature>
<feature type="short sequence motif" description="'KMSKS' region">
    <location>
        <begin position="595"/>
        <end position="599"/>
    </location>
</feature>
<feature type="binding site" evidence="1">
    <location>
        <position position="554"/>
    </location>
    <ligand>
        <name>L-isoleucyl-5'-AMP</name>
        <dbReference type="ChEBI" id="CHEBI:178002"/>
    </ligand>
</feature>
<feature type="binding site" evidence="1">
    <location>
        <position position="598"/>
    </location>
    <ligand>
        <name>ATP</name>
        <dbReference type="ChEBI" id="CHEBI:30616"/>
    </ligand>
</feature>
<proteinExistence type="inferred from homology"/>
<sequence>MKLKETLNLGQTAFPMRAGLPNKEPQWQEAWDQADIYKKRQALNEGKPAFHLHDGPPYANGNIHVGHALNKISKDIIVRSKSMSGFRAPYVPGWDTHGLPIEQVLAKKGVKRKEMDLAEYLEMCRDYALSQVDKQRDDFKRLGVSADWENPYITLTPDYEADQVRVFGAMADKGYIYRGAKPVYWSWSSESALAEAEIEYHDIDSTSLYYANKVKDGKGILDTDTYIVVWTTTPFTVTASRGLTVGPDMEYVVVAPVGSERKYLLAEVLVDSLAAKFGWENFEIVTHHTGKELNHIVTEHPWDTEVEELVILGDHVTTDSGTGIVHTAPGFGEDDYNVGIANGLDVVVTVDSRGLMMENAGPDFEGQFYDKVTPLVKEKLGDLLLASEVINHSYPFDWRTKKPIIWRAVPQWFASVSKFRQEILDEIEKTNFQPEWGKKRLYNMIRDRGDWVISRQRAWGVPLPIFYAEDGTAIMTKEVTDHVADLFAEYGSIVWWQRDAKDLLPAGYTHPGSPNGLFEKETDIMDVWFDSGSSWNGVMNARENLSYPADLYLEGSDQYRGWFNSSLITSVAVNGHAPYKAVLSQGFVLDGKGEKMSKSLGNTILPSDVEKQFGAEILRLWVTSVDSSNDVRISMDILKQTSEIYRKIRNTLRFLIANTSDFNPKQDAVAYENLGAVDRYMTIKFNQVVDTINKAYAAYDFMAIYKAVVNFVTVDLSAFYLDFAKDVVYIEAANSPERRRMQTVFYDILVKLTKLLTPILPHTAEEIWSYLEHEEEEFVQLAEMPVAQTFSGQEEILEEWSAFMTLRTQAQKALEEARNAKVIGKSLEAHLTIYASQEVKTLLTALNSDIALLMIVSQLTIADEADKPADSVSFEGVAFTVEHAEGEVCERSRRIDPTTRMRSYGVAVCDASAAIIEQYYPEAVAQGFEA</sequence>
<keyword id="KW-0030">Aminoacyl-tRNA synthetase</keyword>
<keyword id="KW-0067">ATP-binding</keyword>
<keyword id="KW-0963">Cytoplasm</keyword>
<keyword id="KW-0436">Ligase</keyword>
<keyword id="KW-0547">Nucleotide-binding</keyword>
<keyword id="KW-0648">Protein biosynthesis</keyword>
<dbReference type="EC" id="6.1.1.5" evidence="1"/>
<dbReference type="EMBL" id="AL766845">
    <property type="protein sequence ID" value="CAD46176.1"/>
    <property type="molecule type" value="Genomic_DNA"/>
</dbReference>
<dbReference type="RefSeq" id="WP_000768154.1">
    <property type="nucleotide sequence ID" value="NC_004368.1"/>
</dbReference>
<dbReference type="SMR" id="Q8E6N1"/>
<dbReference type="KEGG" id="san:gbs0532"/>
<dbReference type="eggNOG" id="COG0060">
    <property type="taxonomic scope" value="Bacteria"/>
</dbReference>
<dbReference type="HOGENOM" id="CLU_001493_7_0_9"/>
<dbReference type="Proteomes" id="UP000000823">
    <property type="component" value="Chromosome"/>
</dbReference>
<dbReference type="GO" id="GO:0005829">
    <property type="term" value="C:cytosol"/>
    <property type="evidence" value="ECO:0007669"/>
    <property type="project" value="TreeGrafter"/>
</dbReference>
<dbReference type="GO" id="GO:0002161">
    <property type="term" value="F:aminoacyl-tRNA deacylase activity"/>
    <property type="evidence" value="ECO:0007669"/>
    <property type="project" value="InterPro"/>
</dbReference>
<dbReference type="GO" id="GO:0005524">
    <property type="term" value="F:ATP binding"/>
    <property type="evidence" value="ECO:0007669"/>
    <property type="project" value="UniProtKB-UniRule"/>
</dbReference>
<dbReference type="GO" id="GO:0004822">
    <property type="term" value="F:isoleucine-tRNA ligase activity"/>
    <property type="evidence" value="ECO:0007669"/>
    <property type="project" value="UniProtKB-UniRule"/>
</dbReference>
<dbReference type="GO" id="GO:0000049">
    <property type="term" value="F:tRNA binding"/>
    <property type="evidence" value="ECO:0007669"/>
    <property type="project" value="InterPro"/>
</dbReference>
<dbReference type="GO" id="GO:0006428">
    <property type="term" value="P:isoleucyl-tRNA aminoacylation"/>
    <property type="evidence" value="ECO:0007669"/>
    <property type="project" value="UniProtKB-UniRule"/>
</dbReference>
<dbReference type="CDD" id="cd07960">
    <property type="entry name" value="Anticodon_Ia_Ile_BEm"/>
    <property type="match status" value="1"/>
</dbReference>
<dbReference type="CDD" id="cd00818">
    <property type="entry name" value="IleRS_core"/>
    <property type="match status" value="1"/>
</dbReference>
<dbReference type="FunFam" id="1.10.10.830:FF:000001">
    <property type="entry name" value="Isoleucine--tRNA ligase"/>
    <property type="match status" value="1"/>
</dbReference>
<dbReference type="FunFam" id="1.10.730.20:FF:000001">
    <property type="entry name" value="Isoleucine--tRNA ligase"/>
    <property type="match status" value="1"/>
</dbReference>
<dbReference type="FunFam" id="3.40.50.620:FF:000092">
    <property type="entry name" value="Isoleucine--tRNA ligase"/>
    <property type="match status" value="1"/>
</dbReference>
<dbReference type="FunFam" id="3.90.740.10:FF:000006">
    <property type="entry name" value="Isoleucine--tRNA ligase"/>
    <property type="match status" value="1"/>
</dbReference>
<dbReference type="Gene3D" id="1.10.730.20">
    <property type="match status" value="1"/>
</dbReference>
<dbReference type="Gene3D" id="3.40.50.620">
    <property type="entry name" value="HUPs"/>
    <property type="match status" value="2"/>
</dbReference>
<dbReference type="Gene3D" id="1.10.10.830">
    <property type="entry name" value="Ile-tRNA synthetase CP2 domain-like"/>
    <property type="match status" value="1"/>
</dbReference>
<dbReference type="HAMAP" id="MF_02002">
    <property type="entry name" value="Ile_tRNA_synth_type1"/>
    <property type="match status" value="1"/>
</dbReference>
<dbReference type="InterPro" id="IPR001412">
    <property type="entry name" value="aa-tRNA-synth_I_CS"/>
</dbReference>
<dbReference type="InterPro" id="IPR002300">
    <property type="entry name" value="aa-tRNA-synth_Ia"/>
</dbReference>
<dbReference type="InterPro" id="IPR033708">
    <property type="entry name" value="Anticodon_Ile_BEm"/>
</dbReference>
<dbReference type="InterPro" id="IPR002301">
    <property type="entry name" value="Ile-tRNA-ligase"/>
</dbReference>
<dbReference type="InterPro" id="IPR023585">
    <property type="entry name" value="Ile-tRNA-ligase_type1"/>
</dbReference>
<dbReference type="InterPro" id="IPR050081">
    <property type="entry name" value="Ile-tRNA_ligase"/>
</dbReference>
<dbReference type="InterPro" id="IPR013155">
    <property type="entry name" value="M/V/L/I-tRNA-synth_anticd-bd"/>
</dbReference>
<dbReference type="InterPro" id="IPR014729">
    <property type="entry name" value="Rossmann-like_a/b/a_fold"/>
</dbReference>
<dbReference type="InterPro" id="IPR009080">
    <property type="entry name" value="tRNAsynth_Ia_anticodon-bd"/>
</dbReference>
<dbReference type="InterPro" id="IPR009008">
    <property type="entry name" value="Val/Leu/Ile-tRNA-synth_edit"/>
</dbReference>
<dbReference type="NCBIfam" id="TIGR00392">
    <property type="entry name" value="ileS"/>
    <property type="match status" value="1"/>
</dbReference>
<dbReference type="PANTHER" id="PTHR42765:SF1">
    <property type="entry name" value="ISOLEUCINE--TRNA LIGASE, MITOCHONDRIAL"/>
    <property type="match status" value="1"/>
</dbReference>
<dbReference type="PANTHER" id="PTHR42765">
    <property type="entry name" value="SOLEUCYL-TRNA SYNTHETASE"/>
    <property type="match status" value="1"/>
</dbReference>
<dbReference type="Pfam" id="PF08264">
    <property type="entry name" value="Anticodon_1"/>
    <property type="match status" value="1"/>
</dbReference>
<dbReference type="Pfam" id="PF00133">
    <property type="entry name" value="tRNA-synt_1"/>
    <property type="match status" value="1"/>
</dbReference>
<dbReference type="PRINTS" id="PR00984">
    <property type="entry name" value="TRNASYNTHILE"/>
</dbReference>
<dbReference type="SUPFAM" id="SSF47323">
    <property type="entry name" value="Anticodon-binding domain of a subclass of class I aminoacyl-tRNA synthetases"/>
    <property type="match status" value="1"/>
</dbReference>
<dbReference type="SUPFAM" id="SSF52374">
    <property type="entry name" value="Nucleotidylyl transferase"/>
    <property type="match status" value="1"/>
</dbReference>
<dbReference type="SUPFAM" id="SSF50677">
    <property type="entry name" value="ValRS/IleRS/LeuRS editing domain"/>
    <property type="match status" value="1"/>
</dbReference>
<dbReference type="PROSITE" id="PS00178">
    <property type="entry name" value="AA_TRNA_LIGASE_I"/>
    <property type="match status" value="1"/>
</dbReference>
<accession>Q8E6N1</accession>
<comment type="function">
    <text evidence="1">Catalyzes the attachment of isoleucine to tRNA(Ile). As IleRS can inadvertently accommodate and process structurally similar amino acids such as valine, to avoid such errors it has two additional distinct tRNA(Ile)-dependent editing activities. One activity is designated as 'pretransfer' editing and involves the hydrolysis of activated Val-AMP. The other activity is designated 'posttransfer' editing and involves deacylation of mischarged Val-tRNA(Ile).</text>
</comment>
<comment type="catalytic activity">
    <reaction evidence="1">
        <text>tRNA(Ile) + L-isoleucine + ATP = L-isoleucyl-tRNA(Ile) + AMP + diphosphate</text>
        <dbReference type="Rhea" id="RHEA:11060"/>
        <dbReference type="Rhea" id="RHEA-COMP:9666"/>
        <dbReference type="Rhea" id="RHEA-COMP:9695"/>
        <dbReference type="ChEBI" id="CHEBI:30616"/>
        <dbReference type="ChEBI" id="CHEBI:33019"/>
        <dbReference type="ChEBI" id="CHEBI:58045"/>
        <dbReference type="ChEBI" id="CHEBI:78442"/>
        <dbReference type="ChEBI" id="CHEBI:78528"/>
        <dbReference type="ChEBI" id="CHEBI:456215"/>
        <dbReference type="EC" id="6.1.1.5"/>
    </reaction>
</comment>
<comment type="subunit">
    <text evidence="1">Monomer.</text>
</comment>
<comment type="subcellular location">
    <subcellularLocation>
        <location evidence="1">Cytoplasm</location>
    </subcellularLocation>
</comment>
<comment type="domain">
    <text evidence="1">IleRS has two distinct active sites: one for aminoacylation and one for editing. The misactivated valine is translocated from the active site to the editing site, which sterically excludes the correctly activated isoleucine. The single editing site contains two valyl binding pockets, one specific for each substrate (Val-AMP or Val-tRNA(Ile)).</text>
</comment>
<comment type="similarity">
    <text evidence="1">Belongs to the class-I aminoacyl-tRNA synthetase family. IleS type 1 subfamily.</text>
</comment>
<reference key="1">
    <citation type="journal article" date="2002" name="Mol. Microbiol.">
        <title>Genome sequence of Streptococcus agalactiae, a pathogen causing invasive neonatal disease.</title>
        <authorList>
            <person name="Glaser P."/>
            <person name="Rusniok C."/>
            <person name="Buchrieser C."/>
            <person name="Chevalier F."/>
            <person name="Frangeul L."/>
            <person name="Msadek T."/>
            <person name="Zouine M."/>
            <person name="Couve E."/>
            <person name="Lalioui L."/>
            <person name="Poyart C."/>
            <person name="Trieu-Cuot P."/>
            <person name="Kunst F."/>
        </authorList>
    </citation>
    <scope>NUCLEOTIDE SEQUENCE [LARGE SCALE GENOMIC DNA]</scope>
    <source>
        <strain>NEM316</strain>
    </source>
</reference>
<protein>
    <recommendedName>
        <fullName evidence="1">Isoleucine--tRNA ligase</fullName>
        <ecNumber evidence="1">6.1.1.5</ecNumber>
    </recommendedName>
    <alternativeName>
        <fullName evidence="1">Isoleucyl-tRNA synthetase</fullName>
        <shortName evidence="1">IleRS</shortName>
    </alternativeName>
</protein>
<organism>
    <name type="scientific">Streptococcus agalactiae serotype III (strain NEM316)</name>
    <dbReference type="NCBI Taxonomy" id="211110"/>
    <lineage>
        <taxon>Bacteria</taxon>
        <taxon>Bacillati</taxon>
        <taxon>Bacillota</taxon>
        <taxon>Bacilli</taxon>
        <taxon>Lactobacillales</taxon>
        <taxon>Streptococcaceae</taxon>
        <taxon>Streptococcus</taxon>
    </lineage>
</organism>